<name>SYK_PICTO</name>
<protein>
    <recommendedName>
        <fullName evidence="1">Lysine--tRNA ligase</fullName>
        <ecNumber evidence="1">6.1.1.6</ecNumber>
    </recommendedName>
    <alternativeName>
        <fullName evidence="1">Lysyl-tRNA synthetase</fullName>
        <shortName evidence="1">LysRS</shortName>
    </alternativeName>
</protein>
<comment type="catalytic activity">
    <reaction evidence="1">
        <text>tRNA(Lys) + L-lysine + ATP = L-lysyl-tRNA(Lys) + AMP + diphosphate</text>
        <dbReference type="Rhea" id="RHEA:20792"/>
        <dbReference type="Rhea" id="RHEA-COMP:9696"/>
        <dbReference type="Rhea" id="RHEA-COMP:9697"/>
        <dbReference type="ChEBI" id="CHEBI:30616"/>
        <dbReference type="ChEBI" id="CHEBI:32551"/>
        <dbReference type="ChEBI" id="CHEBI:33019"/>
        <dbReference type="ChEBI" id="CHEBI:78442"/>
        <dbReference type="ChEBI" id="CHEBI:78529"/>
        <dbReference type="ChEBI" id="CHEBI:456215"/>
        <dbReference type="EC" id="6.1.1.6"/>
    </reaction>
</comment>
<comment type="subcellular location">
    <subcellularLocation>
        <location evidence="1">Cytoplasm</location>
    </subcellularLocation>
</comment>
<comment type="similarity">
    <text evidence="1">Belongs to the class-I aminoacyl-tRNA synthetase family.</text>
</comment>
<keyword id="KW-0030">Aminoacyl-tRNA synthetase</keyword>
<keyword id="KW-0067">ATP-binding</keyword>
<keyword id="KW-0963">Cytoplasm</keyword>
<keyword id="KW-0436">Ligase</keyword>
<keyword id="KW-0547">Nucleotide-binding</keyword>
<keyword id="KW-0648">Protein biosynthesis</keyword>
<sequence>MHWSESLLKDVSGDQRISTGISPSGPIHIGNMREILTGDIIYKEALKLGIKASFIYLCDDMDPLRKVYPFLPGSYERYVGHPLSMIPAPDGDKTYSEYFLEPFKETIDKIDVRPEIISTTSLYKNGVLSRAIDIAMNNREKIKNILNSIGNYKITGDWYPYEPVCKSCGRINTTTVISYNYPYAEYKCKCGYTGKADIRTDDGKMPWRVEWPAKWFSLHVTIEPFGKDHGAAGGSYDTGKAIASDIFNINPPLPLLYERIFLKGKGVMHSSTGVVIPASEMIKFSPPEIIRFLIAKNNPGRHIDFDPGPGLLNLIDEYEKYERAYFGLDSVKDDDYKEVYELSRLKILKEPEKITFRHIVTLVQIYNNNDALLSALKRSGYEKDYIDDYIMNEIDTARYWLEKYAPPEMKFSLTDENINLNDDERKIVNEFLENIDNIEWSPDSIHNYVYDIIGRSKMRPQDAFAVFYKILIGRSRGPRLGYFIYNLGREYIIKRFSSILAETF</sequence>
<organism>
    <name type="scientific">Picrophilus torridus (strain ATCC 700027 / DSM 9790 / JCM 10055 / NBRC 100828 / KAW 2/3)</name>
    <dbReference type="NCBI Taxonomy" id="1122961"/>
    <lineage>
        <taxon>Archaea</taxon>
        <taxon>Methanobacteriati</taxon>
        <taxon>Thermoplasmatota</taxon>
        <taxon>Thermoplasmata</taxon>
        <taxon>Thermoplasmatales</taxon>
        <taxon>Picrophilaceae</taxon>
        <taxon>Picrophilus</taxon>
    </lineage>
</organism>
<reference key="1">
    <citation type="journal article" date="2004" name="Proc. Natl. Acad. Sci. U.S.A.">
        <title>Genome sequence of Picrophilus torridus and its implications for life around pH 0.</title>
        <authorList>
            <person name="Fuetterer O."/>
            <person name="Angelov A."/>
            <person name="Liesegang H."/>
            <person name="Gottschalk G."/>
            <person name="Schleper C."/>
            <person name="Schepers B."/>
            <person name="Dock C."/>
            <person name="Antranikian G."/>
            <person name="Liebl W."/>
        </authorList>
    </citation>
    <scope>NUCLEOTIDE SEQUENCE [LARGE SCALE GENOMIC DNA]</scope>
    <source>
        <strain>ATCC 700027 / DSM 9790 / JCM 10055 / NBRC 100828 / KAW 2/3</strain>
    </source>
</reference>
<evidence type="ECO:0000255" key="1">
    <source>
        <dbReference type="HAMAP-Rule" id="MF_00177"/>
    </source>
</evidence>
<proteinExistence type="inferred from homology"/>
<feature type="chain" id="PRO_0000259352" description="Lysine--tRNA ligase">
    <location>
        <begin position="1"/>
        <end position="504"/>
    </location>
</feature>
<feature type="short sequence motif" description="'HIGH' region">
    <location>
        <begin position="23"/>
        <end position="31"/>
    </location>
</feature>
<dbReference type="EC" id="6.1.1.6" evidence="1"/>
<dbReference type="EMBL" id="AE017261">
    <property type="protein sequence ID" value="AAT43051.1"/>
    <property type="molecule type" value="Genomic_DNA"/>
</dbReference>
<dbReference type="RefSeq" id="WP_011177267.1">
    <property type="nucleotide sequence ID" value="NC_005877.1"/>
</dbReference>
<dbReference type="SMR" id="Q6L1V1"/>
<dbReference type="STRING" id="263820.PTO0466"/>
<dbReference type="PaxDb" id="263820-PTO0466"/>
<dbReference type="GeneID" id="2844802"/>
<dbReference type="KEGG" id="pto:PTO0466"/>
<dbReference type="PATRIC" id="fig|263820.9.peg.492"/>
<dbReference type="eggNOG" id="arCOG00485">
    <property type="taxonomic scope" value="Archaea"/>
</dbReference>
<dbReference type="HOGENOM" id="CLU_025562_0_0_2"/>
<dbReference type="InParanoid" id="Q6L1V1"/>
<dbReference type="OrthoDB" id="6838at2157"/>
<dbReference type="Proteomes" id="UP000000438">
    <property type="component" value="Chromosome"/>
</dbReference>
<dbReference type="GO" id="GO:0005737">
    <property type="term" value="C:cytoplasm"/>
    <property type="evidence" value="ECO:0007669"/>
    <property type="project" value="UniProtKB-SubCell"/>
</dbReference>
<dbReference type="GO" id="GO:0005524">
    <property type="term" value="F:ATP binding"/>
    <property type="evidence" value="ECO:0007669"/>
    <property type="project" value="UniProtKB-UniRule"/>
</dbReference>
<dbReference type="GO" id="GO:0004824">
    <property type="term" value="F:lysine-tRNA ligase activity"/>
    <property type="evidence" value="ECO:0007669"/>
    <property type="project" value="UniProtKB-UniRule"/>
</dbReference>
<dbReference type="GO" id="GO:0000049">
    <property type="term" value="F:tRNA binding"/>
    <property type="evidence" value="ECO:0007669"/>
    <property type="project" value="InterPro"/>
</dbReference>
<dbReference type="GO" id="GO:0006430">
    <property type="term" value="P:lysyl-tRNA aminoacylation"/>
    <property type="evidence" value="ECO:0007669"/>
    <property type="project" value="UniProtKB-UniRule"/>
</dbReference>
<dbReference type="Gene3D" id="1.10.10.350">
    <property type="match status" value="1"/>
</dbReference>
<dbReference type="Gene3D" id="1.10.10.770">
    <property type="match status" value="1"/>
</dbReference>
<dbReference type="Gene3D" id="3.40.50.620">
    <property type="entry name" value="HUPs"/>
    <property type="match status" value="2"/>
</dbReference>
<dbReference type="HAMAP" id="MF_00177">
    <property type="entry name" value="Lys_tRNA_synth_class1"/>
    <property type="match status" value="1"/>
</dbReference>
<dbReference type="InterPro" id="IPR020751">
    <property type="entry name" value="aa-tRNA-synth_I_codon-bd_sub2"/>
</dbReference>
<dbReference type="InterPro" id="IPR001412">
    <property type="entry name" value="aa-tRNA-synth_I_CS"/>
</dbReference>
<dbReference type="InterPro" id="IPR008925">
    <property type="entry name" value="aa_tRNA-synth_I_cd-bd_sf"/>
</dbReference>
<dbReference type="InterPro" id="IPR002904">
    <property type="entry name" value="Lys-tRNA-ligase"/>
</dbReference>
<dbReference type="InterPro" id="IPR014729">
    <property type="entry name" value="Rossmann-like_a/b/a_fold"/>
</dbReference>
<dbReference type="NCBIfam" id="TIGR00467">
    <property type="entry name" value="lysS_arch"/>
    <property type="match status" value="1"/>
</dbReference>
<dbReference type="PANTHER" id="PTHR37940">
    <property type="entry name" value="LYSINE--TRNA LIGASE"/>
    <property type="match status" value="1"/>
</dbReference>
<dbReference type="PANTHER" id="PTHR37940:SF1">
    <property type="entry name" value="LYSINE--TRNA LIGASE"/>
    <property type="match status" value="1"/>
</dbReference>
<dbReference type="Pfam" id="PF01921">
    <property type="entry name" value="tRNA-synt_1f"/>
    <property type="match status" value="1"/>
</dbReference>
<dbReference type="SUPFAM" id="SSF48163">
    <property type="entry name" value="An anticodon-binding domain of class I aminoacyl-tRNA synthetases"/>
    <property type="match status" value="1"/>
</dbReference>
<dbReference type="SUPFAM" id="SSF52374">
    <property type="entry name" value="Nucleotidylyl transferase"/>
    <property type="match status" value="1"/>
</dbReference>
<dbReference type="PROSITE" id="PS00178">
    <property type="entry name" value="AA_TRNA_LIGASE_I"/>
    <property type="match status" value="1"/>
</dbReference>
<accession>Q6L1V1</accession>
<gene>
    <name evidence="1" type="primary">lysS</name>
    <name type="ordered locus">PTO0466</name>
</gene>